<sequence>MIKKVLQLLIFHLTLAEIVLSGNVVVWPTDGSHWLNIKILLEELVQRNHSVTVLAPSETLFINSRLDAFINFEEIPVSYTKSKIDEIIEHMIALWLDHRPTPLTMWTFYKELGNLLATFYTTNKQMCDGVLNNPTVMERLQKGGFDVLLADPVTMCGELVALKLGIPFVYTLRFSPAFTVERHCGKIPAPISYVPAALSELTDQMSFGERVKNIISYSLQDYIFKTYWGEWNSYYSKVLGRPTTLCETMGKAEIWLMRTYWDFEFPRPYLPNFEFVGGLHCKPAKPLPKEMEEFVQTSGEHGIVVFSLGSMVKNLTDEKANLIASALAQIPQKVLWRYKGKIPDTLGSNTRLFDWIPQNDLLGHPKTRAFITHGGTNGIYEAIYHGIPMVGVPMFADQPDNIAHMKAKGAAVEVNMNTMTSSDLLNALRTVINEPSYKENAMRLSRIHHDQPVKPLDRAVFWIEFVMRHKGAKHLRVAAHDLSWFQYHSLDVIGFLLACVASAILLVAKCCLFIFQKVGKTGKKKKRD</sequence>
<name>UD2A2_MOUSE</name>
<keyword id="KW-0325">Glycoprotein</keyword>
<keyword id="KW-0328">Glycosyltransferase</keyword>
<keyword id="KW-0443">Lipid metabolism</keyword>
<keyword id="KW-0472">Membrane</keyword>
<keyword id="KW-1185">Reference proteome</keyword>
<keyword id="KW-0732">Signal</keyword>
<keyword id="KW-0808">Transferase</keyword>
<keyword id="KW-0812">Transmembrane</keyword>
<keyword id="KW-1133">Transmembrane helix</keyword>
<comment type="function">
    <text evidence="1">UDP-glucuronosyltransferase (UGT) that catalyzes phase II biotransformation reactions in which lipophilic substrates are conjugated with glucuronic acid to increase the metabolite's water solubility, thereby facilitating excretion into either the urine or bile. Essential for the elimination and detoxification of drugs, xenobiotics and endogenous compounds. Catalyzes the glucuronidation of endogenous estrogen hormone estradiol. Contributes to bile acid (BA) detoxification by catalyzing the glucuronidation of BA substrates, which are natural detergents for dietary lipids absorption. Potential role in detoxification of toxic waste compounds in the amniotic fluid before birth, and air-born chemical after birth.</text>
</comment>
<comment type="catalytic activity">
    <reaction evidence="1">
        <text>glucuronate acceptor + UDP-alpha-D-glucuronate = acceptor beta-D-glucuronoside + UDP + H(+)</text>
        <dbReference type="Rhea" id="RHEA:21032"/>
        <dbReference type="ChEBI" id="CHEBI:15378"/>
        <dbReference type="ChEBI" id="CHEBI:58052"/>
        <dbReference type="ChEBI" id="CHEBI:58223"/>
        <dbReference type="ChEBI" id="CHEBI:132367"/>
        <dbReference type="ChEBI" id="CHEBI:132368"/>
        <dbReference type="EC" id="2.4.1.17"/>
    </reaction>
    <physiologicalReaction direction="left-to-right" evidence="1">
        <dbReference type="Rhea" id="RHEA:21033"/>
    </physiologicalReaction>
</comment>
<comment type="catalytic activity">
    <reaction evidence="1">
        <text>17alpha-estradiol + UDP-alpha-D-glucuronate = 17alpha-estradiol 3-O-(beta-D-glucuronate) + UDP + H(+)</text>
        <dbReference type="Rhea" id="RHEA:52868"/>
        <dbReference type="ChEBI" id="CHEBI:15378"/>
        <dbReference type="ChEBI" id="CHEBI:17160"/>
        <dbReference type="ChEBI" id="CHEBI:57529"/>
        <dbReference type="ChEBI" id="CHEBI:58052"/>
        <dbReference type="ChEBI" id="CHEBI:58223"/>
    </reaction>
    <physiologicalReaction direction="left-to-right" evidence="1">
        <dbReference type="Rhea" id="RHEA:52869"/>
    </physiologicalReaction>
</comment>
<comment type="catalytic activity">
    <reaction evidence="1">
        <text>17beta-estradiol + UDP-alpha-D-glucuronate = 17beta-estradiol 3-O-(beta-D-glucuronate) + UDP + H(+)</text>
        <dbReference type="Rhea" id="RHEA:52460"/>
        <dbReference type="ChEBI" id="CHEBI:15378"/>
        <dbReference type="ChEBI" id="CHEBI:16469"/>
        <dbReference type="ChEBI" id="CHEBI:58052"/>
        <dbReference type="ChEBI" id="CHEBI:58223"/>
        <dbReference type="ChEBI" id="CHEBI:136641"/>
    </reaction>
    <physiologicalReaction direction="left-to-right" evidence="1">
        <dbReference type="Rhea" id="RHEA:52461"/>
    </physiologicalReaction>
</comment>
<comment type="catalytic activity">
    <reaction evidence="1">
        <text>chenodeoxycholate + UDP-alpha-D-glucuronate = chenodeoxycholoyl-24-O-(beta-D-glucuronate) + UDP</text>
        <dbReference type="Rhea" id="RHEA:52940"/>
        <dbReference type="ChEBI" id="CHEBI:36234"/>
        <dbReference type="ChEBI" id="CHEBI:58052"/>
        <dbReference type="ChEBI" id="CHEBI:58223"/>
        <dbReference type="ChEBI" id="CHEBI:136899"/>
    </reaction>
    <physiologicalReaction direction="left-to-right" evidence="1">
        <dbReference type="Rhea" id="RHEA:52941"/>
    </physiologicalReaction>
</comment>
<comment type="catalytic activity">
    <reaction evidence="1">
        <text>lithocholate + UDP-alpha-D-glucuronate = lithocholoyl-24-O-(beta-D-glucuronate) + UDP</text>
        <dbReference type="Rhea" id="RHEA:52952"/>
        <dbReference type="ChEBI" id="CHEBI:29744"/>
        <dbReference type="ChEBI" id="CHEBI:58052"/>
        <dbReference type="ChEBI" id="CHEBI:58223"/>
        <dbReference type="ChEBI" id="CHEBI:136902"/>
    </reaction>
    <physiologicalReaction direction="left-to-right" evidence="1">
        <dbReference type="Rhea" id="RHEA:52953"/>
    </physiologicalReaction>
</comment>
<comment type="catalytic activity">
    <reaction evidence="1">
        <text>deoxycholate + UDP-alpha-D-glucuronate = deoxycholoyl-24-O-(beta-D-glucuronate) + UDP</text>
        <dbReference type="Rhea" id="RHEA:52948"/>
        <dbReference type="ChEBI" id="CHEBI:23614"/>
        <dbReference type="ChEBI" id="CHEBI:58052"/>
        <dbReference type="ChEBI" id="CHEBI:58223"/>
        <dbReference type="ChEBI" id="CHEBI:136901"/>
    </reaction>
    <physiologicalReaction direction="left-to-right" evidence="1">
        <dbReference type="Rhea" id="RHEA:52949"/>
    </physiologicalReaction>
</comment>
<comment type="catalytic activity">
    <reaction evidence="1">
        <text>hyocholate + UDP-alpha-D-glucuronate = hyocholoyl-24-O-(beta-D-glucuronate) + UDP</text>
        <dbReference type="Rhea" id="RHEA:52960"/>
        <dbReference type="ChEBI" id="CHEBI:58052"/>
        <dbReference type="ChEBI" id="CHEBI:58223"/>
        <dbReference type="ChEBI" id="CHEBI:133661"/>
        <dbReference type="ChEBI" id="CHEBI:136904"/>
    </reaction>
    <physiologicalReaction direction="left-to-right" evidence="1">
        <dbReference type="Rhea" id="RHEA:52961"/>
    </physiologicalReaction>
</comment>
<comment type="catalytic activity">
    <reaction evidence="1">
        <text>hyodeoxycholate + UDP-alpha-D-glucuronate = hyodeoxycholate 6-O-(beta-D-glucuronate) + UDP + H(+)</text>
        <dbReference type="Rhea" id="RHEA:52964"/>
        <dbReference type="ChEBI" id="CHEBI:15378"/>
        <dbReference type="ChEBI" id="CHEBI:58052"/>
        <dbReference type="ChEBI" id="CHEBI:58223"/>
        <dbReference type="ChEBI" id="CHEBI:58875"/>
        <dbReference type="ChEBI" id="CHEBI:136905"/>
    </reaction>
    <physiologicalReaction direction="left-to-right" evidence="1">
        <dbReference type="Rhea" id="RHEA:52965"/>
    </physiologicalReaction>
</comment>
<comment type="subcellular location">
    <subcellularLocation>
        <location evidence="2">Membrane</location>
        <topology evidence="3">Single-pass type I membrane protein</topology>
    </subcellularLocation>
</comment>
<comment type="miscellaneous">
    <text evidence="1">UGT2A2 isoform is part of the UGT2A complex locus which displays alternative use of promoters and exons. The locus is defined by 2 alternative promoters resulting in 2 functionally active polypeptides UGT2A1 and UGT2A2. Alternative splicing of exons results in additional isoforms for each protein class.</text>
</comment>
<comment type="similarity">
    <text evidence="4">Belongs to the UDP-glycosyltransferase family.</text>
</comment>
<evidence type="ECO:0000250" key="1">
    <source>
        <dbReference type="UniProtKB" id="P0DTE5"/>
    </source>
</evidence>
<evidence type="ECO:0000250" key="2">
    <source>
        <dbReference type="UniProtKB" id="Q9Y4X1"/>
    </source>
</evidence>
<evidence type="ECO:0000255" key="3"/>
<evidence type="ECO:0000305" key="4"/>
<evidence type="ECO:0000312" key="5">
    <source>
        <dbReference type="MGI" id="MGI:3576095"/>
    </source>
</evidence>
<gene>
    <name evidence="5" type="primary">Ugt2a2</name>
</gene>
<organism>
    <name type="scientific">Mus musculus</name>
    <name type="common">Mouse</name>
    <dbReference type="NCBI Taxonomy" id="10090"/>
    <lineage>
        <taxon>Eukaryota</taxon>
        <taxon>Metazoa</taxon>
        <taxon>Chordata</taxon>
        <taxon>Craniata</taxon>
        <taxon>Vertebrata</taxon>
        <taxon>Euteleostomi</taxon>
        <taxon>Mammalia</taxon>
        <taxon>Eutheria</taxon>
        <taxon>Euarchontoglires</taxon>
        <taxon>Glires</taxon>
        <taxon>Rodentia</taxon>
        <taxon>Myomorpha</taxon>
        <taxon>Muroidea</taxon>
        <taxon>Muridae</taxon>
        <taxon>Murinae</taxon>
        <taxon>Mus</taxon>
        <taxon>Mus</taxon>
    </lineage>
</organism>
<dbReference type="EC" id="2.4.1.17" evidence="1"/>
<dbReference type="EMBL" id="BC058786">
    <property type="protein sequence ID" value="AAH58786.1"/>
    <property type="molecule type" value="mRNA"/>
</dbReference>
<dbReference type="CCDS" id="CCDS19390.1"/>
<dbReference type="RefSeq" id="NP_001019319.1">
    <property type="nucleotide sequence ID" value="NM_001024148.1"/>
</dbReference>
<dbReference type="SMR" id="Q6PDD0"/>
<dbReference type="FunCoup" id="Q6PDD0">
    <property type="interactions" value="372"/>
</dbReference>
<dbReference type="STRING" id="10090.ENSMUSP00000078740"/>
<dbReference type="CAZy" id="GT1">
    <property type="family name" value="Glycosyltransferase Family 1"/>
</dbReference>
<dbReference type="GlyCosmos" id="Q6PDD0">
    <property type="glycosylation" value="2 sites, No reported glycans"/>
</dbReference>
<dbReference type="GlyGen" id="Q6PDD0">
    <property type="glycosylation" value="3 sites, 1 N-linked glycan (1 site)"/>
</dbReference>
<dbReference type="iPTMnet" id="Q6PDD0"/>
<dbReference type="PhosphoSitePlus" id="Q6PDD0"/>
<dbReference type="jPOST" id="Q6PDD0"/>
<dbReference type="ProteomicsDB" id="275378"/>
<dbReference type="Antibodypedia" id="72053">
    <property type="antibodies" value="7 antibodies from 4 providers"/>
</dbReference>
<dbReference type="DNASU" id="552899"/>
<dbReference type="Ensembl" id="ENSMUST00000079811.13">
    <property type="protein sequence ID" value="ENSMUSP00000078740.7"/>
    <property type="gene ID" value="ENSMUSG00000029268.15"/>
</dbReference>
<dbReference type="GeneID" id="552899"/>
<dbReference type="KEGG" id="mmu:552899"/>
<dbReference type="UCSC" id="uc008xyj.2">
    <property type="organism name" value="mouse"/>
</dbReference>
<dbReference type="AGR" id="MGI:3576095"/>
<dbReference type="CTD" id="574537"/>
<dbReference type="MGI" id="MGI:3576095">
    <property type="gene designation" value="Ugt2a2"/>
</dbReference>
<dbReference type="VEuPathDB" id="HostDB:ENSMUSG00000029268"/>
<dbReference type="GeneTree" id="ENSGT00940000161344"/>
<dbReference type="HOGENOM" id="CLU_012949_3_0_1"/>
<dbReference type="InParanoid" id="Q6PDD0"/>
<dbReference type="OMA" id="ANNWERQ"/>
<dbReference type="PhylomeDB" id="Q6PDD0"/>
<dbReference type="TreeFam" id="TF315472"/>
<dbReference type="Reactome" id="R-MMU-156588">
    <property type="pathway name" value="Glucuronidation"/>
</dbReference>
<dbReference type="Reactome" id="R-MMU-9749641">
    <property type="pathway name" value="Aspirin ADME"/>
</dbReference>
<dbReference type="BioGRID-ORCS" id="552899">
    <property type="hits" value="3 hits in 67 CRISPR screens"/>
</dbReference>
<dbReference type="PRO" id="PR:Q6PDD0"/>
<dbReference type="Proteomes" id="UP000000589">
    <property type="component" value="Chromosome 5"/>
</dbReference>
<dbReference type="RNAct" id="Q6PDD0">
    <property type="molecule type" value="protein"/>
</dbReference>
<dbReference type="Bgee" id="ENSMUSG00000029268">
    <property type="expression patterns" value="Expressed in respiratory tract epithelium and 12 other cell types or tissues"/>
</dbReference>
<dbReference type="ExpressionAtlas" id="Q6PDD0">
    <property type="expression patterns" value="baseline"/>
</dbReference>
<dbReference type="GO" id="GO:0016020">
    <property type="term" value="C:membrane"/>
    <property type="evidence" value="ECO:0007669"/>
    <property type="project" value="UniProtKB-SubCell"/>
</dbReference>
<dbReference type="GO" id="GO:0015020">
    <property type="term" value="F:glucuronosyltransferase activity"/>
    <property type="evidence" value="ECO:0007669"/>
    <property type="project" value="UniProtKB-EC"/>
</dbReference>
<dbReference type="GO" id="GO:0008206">
    <property type="term" value="P:bile acid metabolic process"/>
    <property type="evidence" value="ECO:0007669"/>
    <property type="project" value="Ensembl"/>
</dbReference>
<dbReference type="GO" id="GO:0009608">
    <property type="term" value="P:response to symbiont"/>
    <property type="evidence" value="ECO:0007669"/>
    <property type="project" value="Ensembl"/>
</dbReference>
<dbReference type="GO" id="GO:0006805">
    <property type="term" value="P:xenobiotic metabolic process"/>
    <property type="evidence" value="ECO:0007669"/>
    <property type="project" value="Ensembl"/>
</dbReference>
<dbReference type="CDD" id="cd03784">
    <property type="entry name" value="GT1_Gtf-like"/>
    <property type="match status" value="1"/>
</dbReference>
<dbReference type="FunFam" id="3.40.50.2000:FF:000001">
    <property type="entry name" value="UDP-glucuronosyltransferase"/>
    <property type="match status" value="1"/>
</dbReference>
<dbReference type="FunFam" id="3.40.50.2000:FF:000081">
    <property type="entry name" value="UDP-glucuronosyltransferase 2A2"/>
    <property type="match status" value="1"/>
</dbReference>
<dbReference type="Gene3D" id="3.40.50.2000">
    <property type="entry name" value="Glycogen Phosphorylase B"/>
    <property type="match status" value="2"/>
</dbReference>
<dbReference type="InterPro" id="IPR050271">
    <property type="entry name" value="UDP-glycosyltransferase"/>
</dbReference>
<dbReference type="InterPro" id="IPR002213">
    <property type="entry name" value="UDP_glucos_trans"/>
</dbReference>
<dbReference type="InterPro" id="IPR035595">
    <property type="entry name" value="UDP_glycos_trans_CS"/>
</dbReference>
<dbReference type="PANTHER" id="PTHR48043">
    <property type="entry name" value="EG:EG0003.4 PROTEIN-RELATED"/>
    <property type="match status" value="1"/>
</dbReference>
<dbReference type="PANTHER" id="PTHR48043:SF129">
    <property type="entry name" value="UDP-GLUCURONOSYLTRANSFERASE 2A2"/>
    <property type="match status" value="1"/>
</dbReference>
<dbReference type="Pfam" id="PF00201">
    <property type="entry name" value="UDPGT"/>
    <property type="match status" value="1"/>
</dbReference>
<dbReference type="SUPFAM" id="SSF53756">
    <property type="entry name" value="UDP-Glycosyltransferase/glycogen phosphorylase"/>
    <property type="match status" value="1"/>
</dbReference>
<dbReference type="PROSITE" id="PS00375">
    <property type="entry name" value="UDPGT"/>
    <property type="match status" value="1"/>
</dbReference>
<reference key="1">
    <citation type="journal article" date="2004" name="Genome Res.">
        <title>The status, quality, and expansion of the NIH full-length cDNA project: the Mammalian Gene Collection (MGC).</title>
        <authorList>
            <consortium name="The MGC Project Team"/>
        </authorList>
    </citation>
    <scope>NUCLEOTIDE SEQUENCE [LARGE SCALE MRNA]</scope>
    <source>
        <tissue>Olfactory epithelium</tissue>
    </source>
</reference>
<feature type="signal peptide" evidence="3">
    <location>
        <begin position="1"/>
        <end position="21"/>
    </location>
</feature>
<feature type="chain" id="PRO_0000299144" description="UDP-glucuronosyltransferase 2A2">
    <location>
        <begin position="22"/>
        <end position="528"/>
    </location>
</feature>
<feature type="topological domain" description="Extracellular" evidence="3">
    <location>
        <begin position="22"/>
        <end position="494"/>
    </location>
</feature>
<feature type="transmembrane region" description="Helical" evidence="3">
    <location>
        <begin position="495"/>
        <end position="515"/>
    </location>
</feature>
<feature type="topological domain" description="Cytoplasmic" evidence="3">
    <location>
        <begin position="516"/>
        <end position="528"/>
    </location>
</feature>
<feature type="glycosylation site" description="N-linked (GlcNAc...) asparagine" evidence="3">
    <location>
        <position position="48"/>
    </location>
</feature>
<feature type="glycosylation site" description="N-linked (GlcNAc...) asparagine" evidence="3">
    <location>
        <position position="314"/>
    </location>
</feature>
<protein>
    <recommendedName>
        <fullName evidence="4">UDP-glucuronosyltransferase 2A2</fullName>
        <shortName>UDPGT 2A2</shortName>
        <shortName>UGT2A2</shortName>
        <ecNumber evidence="1">2.4.1.17</ecNumber>
    </recommendedName>
</protein>
<accession>Q6PDD0</accession>
<proteinExistence type="evidence at transcript level"/>